<sequence length="338" mass="38774">MSSDNESTPSQATVEMMATSPAKIKEYPEPLALHEVVVKDSSVFWDTLRRFHSIMSTKFMIPVIGGKELDLHVLYVEVTRRGGYEKVVVEKKWREVGGVFRFSATTTSASFVLRKHYLNLLFHYEQVHLFTARGPLLHPIATFHANPSTSKEMALVEYTPPSIRYHNTHPPSQGSSSFTAIGTIEGKFDCGYLVKVKLGSEILNGVLYHSAQPGPSSSPTAVLNNAVVPYVETGRRRRRLGKRRRSRRREDPNYPKPNRSGYNFFFAEKHCKLKSLYPNKEREFTKLIGESWSNLSTEERMVYQDIGLKDKERYQRELNEYRETLRLRDGDMTNGKAF</sequence>
<protein>
    <recommendedName>
        <fullName>High mobility group B protein 9</fullName>
    </recommendedName>
    <alternativeName>
        <fullName>Nucleosome/chromatin assembly factor group D 09</fullName>
        <shortName>Nucleosome/chromatin assembly factor group D 9</shortName>
    </alternativeName>
    <alternativeName>
        <fullName evidence="6">Protein NUCLEAR FUSION DEFECTIVE 9</fullName>
    </alternativeName>
</protein>
<feature type="chain" id="PRO_0000399934" description="High mobility group B protein 9">
    <location>
        <begin position="1"/>
        <end position="338"/>
    </location>
</feature>
<feature type="domain" description="ARID" evidence="2">
    <location>
        <begin position="38"/>
        <end position="129"/>
    </location>
</feature>
<feature type="DNA-binding region" description="HMG box" evidence="1">
    <location>
        <begin position="255"/>
        <end position="322"/>
    </location>
</feature>
<feature type="region of interest" description="Disordered" evidence="3">
    <location>
        <begin position="233"/>
        <end position="259"/>
    </location>
</feature>
<feature type="compositionally biased region" description="Basic residues" evidence="3">
    <location>
        <begin position="235"/>
        <end position="247"/>
    </location>
</feature>
<gene>
    <name type="primary">HMGB9</name>
    <name type="synonym">ARID-HMG1</name>
    <name evidence="6" type="synonym">NFD9</name>
    <name type="ordered locus">At1g76110</name>
    <name type="ORF">T23E18.4</name>
</gene>
<accession>Q9SGS2</accession>
<keyword id="KW-0217">Developmental protein</keyword>
<keyword id="KW-0238">DNA-binding</keyword>
<keyword id="KW-0415">Karyogamy</keyword>
<keyword id="KW-0539">Nucleus</keyword>
<keyword id="KW-1185">Reference proteome</keyword>
<keyword id="KW-0804">Transcription</keyword>
<keyword id="KW-0805">Transcription regulation</keyword>
<evidence type="ECO:0000255" key="1">
    <source>
        <dbReference type="PROSITE-ProRule" id="PRU00267"/>
    </source>
</evidence>
<evidence type="ECO:0000255" key="2">
    <source>
        <dbReference type="PROSITE-ProRule" id="PRU00355"/>
    </source>
</evidence>
<evidence type="ECO:0000256" key="3">
    <source>
        <dbReference type="SAM" id="MobiDB-lite"/>
    </source>
</evidence>
<evidence type="ECO:0000269" key="4">
    <source>
    </source>
</evidence>
<evidence type="ECO:0000269" key="5">
    <source>
    </source>
</evidence>
<evidence type="ECO:0000303" key="6">
    <source>
    </source>
</evidence>
<dbReference type="EMBL" id="AC009978">
    <property type="protein sequence ID" value="AAF17649.1"/>
    <property type="molecule type" value="Genomic_DNA"/>
</dbReference>
<dbReference type="EMBL" id="CP002684">
    <property type="protein sequence ID" value="AEE35797.1"/>
    <property type="molecule type" value="Genomic_DNA"/>
</dbReference>
<dbReference type="EMBL" id="AY099630">
    <property type="protein sequence ID" value="AAM20481.1"/>
    <property type="molecule type" value="mRNA"/>
</dbReference>
<dbReference type="EMBL" id="BT008823">
    <property type="protein sequence ID" value="AAP68262.1"/>
    <property type="molecule type" value="mRNA"/>
</dbReference>
<dbReference type="PIR" id="B96789">
    <property type="entry name" value="B96789"/>
</dbReference>
<dbReference type="RefSeq" id="NP_177738.1">
    <property type="nucleotide sequence ID" value="NM_106260.3"/>
</dbReference>
<dbReference type="SMR" id="Q9SGS2"/>
<dbReference type="BioGRID" id="29162">
    <property type="interactions" value="4"/>
</dbReference>
<dbReference type="FunCoup" id="Q9SGS2">
    <property type="interactions" value="1340"/>
</dbReference>
<dbReference type="IntAct" id="Q9SGS2">
    <property type="interactions" value="4"/>
</dbReference>
<dbReference type="STRING" id="3702.Q9SGS2"/>
<dbReference type="PaxDb" id="3702-AT1G76110.1"/>
<dbReference type="ProteomicsDB" id="230257"/>
<dbReference type="EnsemblPlants" id="AT1G76110.1">
    <property type="protein sequence ID" value="AT1G76110.1"/>
    <property type="gene ID" value="AT1G76110"/>
</dbReference>
<dbReference type="GeneID" id="843943"/>
<dbReference type="Gramene" id="AT1G76110.1">
    <property type="protein sequence ID" value="AT1G76110.1"/>
    <property type="gene ID" value="AT1G76110"/>
</dbReference>
<dbReference type="KEGG" id="ath:AT1G76110"/>
<dbReference type="Araport" id="AT1G76110"/>
<dbReference type="TAIR" id="AT1G76110"/>
<dbReference type="eggNOG" id="KOG0381">
    <property type="taxonomic scope" value="Eukaryota"/>
</dbReference>
<dbReference type="eggNOG" id="KOG2744">
    <property type="taxonomic scope" value="Eukaryota"/>
</dbReference>
<dbReference type="HOGENOM" id="CLU_035371_0_0_1"/>
<dbReference type="InParanoid" id="Q9SGS2"/>
<dbReference type="OMA" id="HILYVEV"/>
<dbReference type="PhylomeDB" id="Q9SGS2"/>
<dbReference type="PRO" id="PR:Q9SGS2"/>
<dbReference type="Proteomes" id="UP000006548">
    <property type="component" value="Chromosome 1"/>
</dbReference>
<dbReference type="ExpressionAtlas" id="Q9SGS2">
    <property type="expression patterns" value="baseline and differential"/>
</dbReference>
<dbReference type="GO" id="GO:0005634">
    <property type="term" value="C:nucleus"/>
    <property type="evidence" value="ECO:0000314"/>
    <property type="project" value="UniProtKB"/>
</dbReference>
<dbReference type="GO" id="GO:0003677">
    <property type="term" value="F:DNA binding"/>
    <property type="evidence" value="ECO:0000314"/>
    <property type="project" value="UniProtKB"/>
</dbReference>
<dbReference type="GO" id="GO:0003700">
    <property type="term" value="F:DNA-binding transcription factor activity"/>
    <property type="evidence" value="ECO:0000250"/>
    <property type="project" value="TAIR"/>
</dbReference>
<dbReference type="GO" id="GO:0000741">
    <property type="term" value="P:karyogamy"/>
    <property type="evidence" value="ECO:0000315"/>
    <property type="project" value="UniProtKB"/>
</dbReference>
<dbReference type="GO" id="GO:0010197">
    <property type="term" value="P:polar nucleus fusion"/>
    <property type="evidence" value="ECO:0000315"/>
    <property type="project" value="UniProtKB"/>
</dbReference>
<dbReference type="GO" id="GO:0006355">
    <property type="term" value="P:regulation of DNA-templated transcription"/>
    <property type="evidence" value="ECO:0000304"/>
    <property type="project" value="TAIR"/>
</dbReference>
<dbReference type="CDD" id="cd16872">
    <property type="entry name" value="ARID_HMGB9-like"/>
    <property type="match status" value="1"/>
</dbReference>
<dbReference type="CDD" id="cd22009">
    <property type="entry name" value="HMG-box_AtHMGB9-like"/>
    <property type="match status" value="1"/>
</dbReference>
<dbReference type="Gene3D" id="1.10.150.60">
    <property type="entry name" value="ARID DNA-binding domain"/>
    <property type="match status" value="1"/>
</dbReference>
<dbReference type="Gene3D" id="1.10.30.10">
    <property type="entry name" value="High mobility group box domain"/>
    <property type="match status" value="1"/>
</dbReference>
<dbReference type="InterPro" id="IPR001606">
    <property type="entry name" value="ARID_dom"/>
</dbReference>
<dbReference type="InterPro" id="IPR036431">
    <property type="entry name" value="ARID_dom_sf"/>
</dbReference>
<dbReference type="InterPro" id="IPR045303">
    <property type="entry name" value="ARID_HMGB9-like"/>
</dbReference>
<dbReference type="InterPro" id="IPR009071">
    <property type="entry name" value="HMG_box_dom"/>
</dbReference>
<dbReference type="InterPro" id="IPR036910">
    <property type="entry name" value="HMG_box_dom_sf"/>
</dbReference>
<dbReference type="PANTHER" id="PTHR46691:SF1">
    <property type="entry name" value="AT-RICH INTERACTIVE DOMAIN-CONTAINING PROTEIN 2"/>
    <property type="match status" value="1"/>
</dbReference>
<dbReference type="PANTHER" id="PTHR46691">
    <property type="entry name" value="HIGH MOBILITY GROUP B PROTEIN 9"/>
    <property type="match status" value="1"/>
</dbReference>
<dbReference type="Pfam" id="PF01388">
    <property type="entry name" value="ARID"/>
    <property type="match status" value="1"/>
</dbReference>
<dbReference type="Pfam" id="PF09011">
    <property type="entry name" value="HMG_box_2"/>
    <property type="match status" value="1"/>
</dbReference>
<dbReference type="SMART" id="SM01014">
    <property type="entry name" value="ARID"/>
    <property type="match status" value="1"/>
</dbReference>
<dbReference type="SMART" id="SM00501">
    <property type="entry name" value="BRIGHT"/>
    <property type="match status" value="1"/>
</dbReference>
<dbReference type="SMART" id="SM00398">
    <property type="entry name" value="HMG"/>
    <property type="match status" value="1"/>
</dbReference>
<dbReference type="SUPFAM" id="SSF46774">
    <property type="entry name" value="ARID-like"/>
    <property type="match status" value="1"/>
</dbReference>
<dbReference type="SUPFAM" id="SSF47095">
    <property type="entry name" value="HMG-box"/>
    <property type="match status" value="1"/>
</dbReference>
<dbReference type="PROSITE" id="PS51011">
    <property type="entry name" value="ARID"/>
    <property type="match status" value="1"/>
</dbReference>
<dbReference type="PROSITE" id="PS50118">
    <property type="entry name" value="HMG_BOX_2"/>
    <property type="match status" value="1"/>
</dbReference>
<reference key="1">
    <citation type="journal article" date="2000" name="Nature">
        <title>Sequence and analysis of chromosome 1 of the plant Arabidopsis thaliana.</title>
        <authorList>
            <person name="Theologis A."/>
            <person name="Ecker J.R."/>
            <person name="Palm C.J."/>
            <person name="Federspiel N.A."/>
            <person name="Kaul S."/>
            <person name="White O."/>
            <person name="Alonso J."/>
            <person name="Altafi H."/>
            <person name="Araujo R."/>
            <person name="Bowman C.L."/>
            <person name="Brooks S.Y."/>
            <person name="Buehler E."/>
            <person name="Chan A."/>
            <person name="Chao Q."/>
            <person name="Chen H."/>
            <person name="Cheuk R.F."/>
            <person name="Chin C.W."/>
            <person name="Chung M.K."/>
            <person name="Conn L."/>
            <person name="Conway A.B."/>
            <person name="Conway A.R."/>
            <person name="Creasy T.H."/>
            <person name="Dewar K."/>
            <person name="Dunn P."/>
            <person name="Etgu P."/>
            <person name="Feldblyum T.V."/>
            <person name="Feng J.-D."/>
            <person name="Fong B."/>
            <person name="Fujii C.Y."/>
            <person name="Gill J.E."/>
            <person name="Goldsmith A.D."/>
            <person name="Haas B."/>
            <person name="Hansen N.F."/>
            <person name="Hughes B."/>
            <person name="Huizar L."/>
            <person name="Hunter J.L."/>
            <person name="Jenkins J."/>
            <person name="Johnson-Hopson C."/>
            <person name="Khan S."/>
            <person name="Khaykin E."/>
            <person name="Kim C.J."/>
            <person name="Koo H.L."/>
            <person name="Kremenetskaia I."/>
            <person name="Kurtz D.B."/>
            <person name="Kwan A."/>
            <person name="Lam B."/>
            <person name="Langin-Hooper S."/>
            <person name="Lee A."/>
            <person name="Lee J.M."/>
            <person name="Lenz C.A."/>
            <person name="Li J.H."/>
            <person name="Li Y.-P."/>
            <person name="Lin X."/>
            <person name="Liu S.X."/>
            <person name="Liu Z.A."/>
            <person name="Luros J.S."/>
            <person name="Maiti R."/>
            <person name="Marziali A."/>
            <person name="Militscher J."/>
            <person name="Miranda M."/>
            <person name="Nguyen M."/>
            <person name="Nierman W.C."/>
            <person name="Osborne B.I."/>
            <person name="Pai G."/>
            <person name="Peterson J."/>
            <person name="Pham P.K."/>
            <person name="Rizzo M."/>
            <person name="Rooney T."/>
            <person name="Rowley D."/>
            <person name="Sakano H."/>
            <person name="Salzberg S.L."/>
            <person name="Schwartz J.R."/>
            <person name="Shinn P."/>
            <person name="Southwick A.M."/>
            <person name="Sun H."/>
            <person name="Tallon L.J."/>
            <person name="Tambunga G."/>
            <person name="Toriumi M.J."/>
            <person name="Town C.D."/>
            <person name="Utterback T."/>
            <person name="Van Aken S."/>
            <person name="Vaysberg M."/>
            <person name="Vysotskaia V.S."/>
            <person name="Walker M."/>
            <person name="Wu D."/>
            <person name="Yu G."/>
            <person name="Fraser C.M."/>
            <person name="Venter J.C."/>
            <person name="Davis R.W."/>
        </authorList>
    </citation>
    <scope>NUCLEOTIDE SEQUENCE [LARGE SCALE GENOMIC DNA]</scope>
    <source>
        <strain>cv. Columbia</strain>
    </source>
</reference>
<reference key="2">
    <citation type="journal article" date="2017" name="Plant J.">
        <title>Araport11: a complete reannotation of the Arabidopsis thaliana reference genome.</title>
        <authorList>
            <person name="Cheng C.Y."/>
            <person name="Krishnakumar V."/>
            <person name="Chan A.P."/>
            <person name="Thibaud-Nissen F."/>
            <person name="Schobel S."/>
            <person name="Town C.D."/>
        </authorList>
    </citation>
    <scope>GENOME REANNOTATION</scope>
    <source>
        <strain>cv. Columbia</strain>
    </source>
</reference>
<reference key="3">
    <citation type="journal article" date="2003" name="Science">
        <title>Empirical analysis of transcriptional activity in the Arabidopsis genome.</title>
        <authorList>
            <person name="Yamada K."/>
            <person name="Lim J."/>
            <person name="Dale J.M."/>
            <person name="Chen H."/>
            <person name="Shinn P."/>
            <person name="Palm C.J."/>
            <person name="Southwick A.M."/>
            <person name="Wu H.C."/>
            <person name="Kim C.J."/>
            <person name="Nguyen M."/>
            <person name="Pham P.K."/>
            <person name="Cheuk R.F."/>
            <person name="Karlin-Newmann G."/>
            <person name="Liu S.X."/>
            <person name="Lam B."/>
            <person name="Sakano H."/>
            <person name="Wu T."/>
            <person name="Yu G."/>
            <person name="Miranda M."/>
            <person name="Quach H.L."/>
            <person name="Tripp M."/>
            <person name="Chang C.H."/>
            <person name="Lee J.M."/>
            <person name="Toriumi M.J."/>
            <person name="Chan M.M."/>
            <person name="Tang C.C."/>
            <person name="Onodera C.S."/>
            <person name="Deng J.M."/>
            <person name="Akiyama K."/>
            <person name="Ansari Y."/>
            <person name="Arakawa T."/>
            <person name="Banh J."/>
            <person name="Banno F."/>
            <person name="Bowser L."/>
            <person name="Brooks S.Y."/>
            <person name="Carninci P."/>
            <person name="Chao Q."/>
            <person name="Choy N."/>
            <person name="Enju A."/>
            <person name="Goldsmith A.D."/>
            <person name="Gurjal M."/>
            <person name="Hansen N.F."/>
            <person name="Hayashizaki Y."/>
            <person name="Johnson-Hopson C."/>
            <person name="Hsuan V.W."/>
            <person name="Iida K."/>
            <person name="Karnes M."/>
            <person name="Khan S."/>
            <person name="Koesema E."/>
            <person name="Ishida J."/>
            <person name="Jiang P.X."/>
            <person name="Jones T."/>
            <person name="Kawai J."/>
            <person name="Kamiya A."/>
            <person name="Meyers C."/>
            <person name="Nakajima M."/>
            <person name="Narusaka M."/>
            <person name="Seki M."/>
            <person name="Sakurai T."/>
            <person name="Satou M."/>
            <person name="Tamse R."/>
            <person name="Vaysberg M."/>
            <person name="Wallender E.K."/>
            <person name="Wong C."/>
            <person name="Yamamura Y."/>
            <person name="Yuan S."/>
            <person name="Shinozaki K."/>
            <person name="Davis R.W."/>
            <person name="Theologis A."/>
            <person name="Ecker J.R."/>
        </authorList>
    </citation>
    <scope>NUCLEOTIDE SEQUENCE [LARGE SCALE MRNA]</scope>
    <source>
        <strain>cv. Columbia</strain>
    </source>
</reference>
<reference key="4">
    <citation type="journal article" date="2006" name="Plant Physiol.">
        <title>NUCLEAR FUSION DEFECTIVE1 encodes the Arabidopsis RPL21M protein and is required for karyogamy during female gametophyte development and fertilization.</title>
        <authorList>
            <person name="Portereiko M.F."/>
            <person name="Sandaklie-Nikolova L."/>
            <person name="Lloyd A."/>
            <person name="Dever C.A."/>
            <person name="Otsuga D."/>
            <person name="Drews G.N."/>
        </authorList>
    </citation>
    <scope>FUNCTION</scope>
    <scope>DISRUPTION PHENOTYPE</scope>
    <source>
        <strain>cv. Columbia</strain>
    </source>
</reference>
<reference key="5">
    <citation type="journal article" date="2008" name="Biochemistry">
        <title>A novel family of plant DNA-binding proteins containing both HMG-box and AT-rich interaction domains.</title>
        <authorList>
            <person name="Hansen F.T."/>
            <person name="Madsen C.K."/>
            <person name="Nordland A.M."/>
            <person name="Grasser M."/>
            <person name="Merkle T."/>
            <person name="Grasser K.D."/>
        </authorList>
    </citation>
    <scope>TISSUE SPECIFICITY</scope>
    <scope>SUBCELLULAR LOCATION</scope>
    <scope>FUNCTION</scope>
</reference>
<proteinExistence type="evidence at protein level"/>
<organism>
    <name type="scientific">Arabidopsis thaliana</name>
    <name type="common">Mouse-ear cress</name>
    <dbReference type="NCBI Taxonomy" id="3702"/>
    <lineage>
        <taxon>Eukaryota</taxon>
        <taxon>Viridiplantae</taxon>
        <taxon>Streptophyta</taxon>
        <taxon>Embryophyta</taxon>
        <taxon>Tracheophyta</taxon>
        <taxon>Spermatophyta</taxon>
        <taxon>Magnoliopsida</taxon>
        <taxon>eudicotyledons</taxon>
        <taxon>Gunneridae</taxon>
        <taxon>Pentapetalae</taxon>
        <taxon>rosids</taxon>
        <taxon>malvids</taxon>
        <taxon>Brassicales</taxon>
        <taxon>Brassicaceae</taxon>
        <taxon>Camelineae</taxon>
        <taxon>Arabidopsis</taxon>
    </lineage>
</organism>
<name>HMGB9_ARATH</name>
<comment type="function">
    <text evidence="4 5">Binds preferentially DNA with A/T-rich content (PubMed:19053246). Required for karyogamy during female gametophyte development, when the two polar nuclei fuse to form the diploid central cell nucleus (PubMed:16698901).</text>
</comment>
<comment type="interaction">
    <interactant intactId="EBI-4425221">
        <id>Q9SGS2</id>
    </interactant>
    <interactant intactId="EBI-15201560">
        <id>Q9LG02</id>
        <label>HMGB11</label>
    </interactant>
    <organismsDiffer>false</organismsDiffer>
    <experiments>3</experiments>
</comment>
<comment type="subcellular location">
    <subcellularLocation>
        <location evidence="1 2 5">Nucleus</location>
    </subcellularLocation>
</comment>
<comment type="tissue specificity">
    <text evidence="5">Predominantly expressed in leaves, flowers and seedlings.</text>
</comment>
<comment type="disruption phenotype">
    <text evidence="4">Failure of fusion of the polar nuclei during megagametogenesis.</text>
</comment>